<comment type="function">
    <text evidence="1">Involved in the binding of tRNA to the ribosomes.</text>
</comment>
<comment type="subunit">
    <text evidence="1">Part of the 30S ribosomal subunit.</text>
</comment>
<comment type="similarity">
    <text evidence="1">Belongs to the universal ribosomal protein uS10 family.</text>
</comment>
<organism>
    <name type="scientific">Acidovorax ebreus (strain TPSY)</name>
    <name type="common">Diaphorobacter sp. (strain TPSY)</name>
    <dbReference type="NCBI Taxonomy" id="535289"/>
    <lineage>
        <taxon>Bacteria</taxon>
        <taxon>Pseudomonadati</taxon>
        <taxon>Pseudomonadota</taxon>
        <taxon>Betaproteobacteria</taxon>
        <taxon>Burkholderiales</taxon>
        <taxon>Comamonadaceae</taxon>
        <taxon>Diaphorobacter</taxon>
    </lineage>
</organism>
<reference key="1">
    <citation type="submission" date="2009-01" db="EMBL/GenBank/DDBJ databases">
        <title>Complete sequence of Diaphorobacter sp. TPSY.</title>
        <authorList>
            <consortium name="US DOE Joint Genome Institute"/>
            <person name="Lucas S."/>
            <person name="Copeland A."/>
            <person name="Lapidus A."/>
            <person name="Glavina del Rio T."/>
            <person name="Tice H."/>
            <person name="Bruce D."/>
            <person name="Goodwin L."/>
            <person name="Pitluck S."/>
            <person name="Chertkov O."/>
            <person name="Brettin T."/>
            <person name="Detter J.C."/>
            <person name="Han C."/>
            <person name="Larimer F."/>
            <person name="Land M."/>
            <person name="Hauser L."/>
            <person name="Kyrpides N."/>
            <person name="Mikhailova N."/>
            <person name="Coates J.D."/>
        </authorList>
    </citation>
    <scope>NUCLEOTIDE SEQUENCE [LARGE SCALE GENOMIC DNA]</scope>
    <source>
        <strain>TPSY</strain>
    </source>
</reference>
<evidence type="ECO:0000255" key="1">
    <source>
        <dbReference type="HAMAP-Rule" id="MF_00508"/>
    </source>
</evidence>
<evidence type="ECO:0000305" key="2"/>
<accession>B9MB72</accession>
<protein>
    <recommendedName>
        <fullName evidence="1">Small ribosomal subunit protein uS10</fullName>
    </recommendedName>
    <alternativeName>
        <fullName evidence="2">30S ribosomal protein S10</fullName>
    </alternativeName>
</protein>
<name>RS10_ACIET</name>
<dbReference type="EMBL" id="CP001392">
    <property type="protein sequence ID" value="ACM31756.1"/>
    <property type="molecule type" value="Genomic_DNA"/>
</dbReference>
<dbReference type="RefSeq" id="WP_003059431.1">
    <property type="nucleotide sequence ID" value="NC_011992.1"/>
</dbReference>
<dbReference type="SMR" id="B9MB72"/>
<dbReference type="GeneID" id="94689732"/>
<dbReference type="KEGG" id="dia:Dtpsy_0272"/>
<dbReference type="eggNOG" id="COG0051">
    <property type="taxonomic scope" value="Bacteria"/>
</dbReference>
<dbReference type="HOGENOM" id="CLU_122625_1_3_4"/>
<dbReference type="Proteomes" id="UP000000450">
    <property type="component" value="Chromosome"/>
</dbReference>
<dbReference type="GO" id="GO:1990904">
    <property type="term" value="C:ribonucleoprotein complex"/>
    <property type="evidence" value="ECO:0007669"/>
    <property type="project" value="UniProtKB-KW"/>
</dbReference>
<dbReference type="GO" id="GO:0005840">
    <property type="term" value="C:ribosome"/>
    <property type="evidence" value="ECO:0007669"/>
    <property type="project" value="UniProtKB-KW"/>
</dbReference>
<dbReference type="GO" id="GO:0003735">
    <property type="term" value="F:structural constituent of ribosome"/>
    <property type="evidence" value="ECO:0007669"/>
    <property type="project" value="InterPro"/>
</dbReference>
<dbReference type="GO" id="GO:0000049">
    <property type="term" value="F:tRNA binding"/>
    <property type="evidence" value="ECO:0007669"/>
    <property type="project" value="UniProtKB-UniRule"/>
</dbReference>
<dbReference type="GO" id="GO:0006412">
    <property type="term" value="P:translation"/>
    <property type="evidence" value="ECO:0007669"/>
    <property type="project" value="UniProtKB-UniRule"/>
</dbReference>
<dbReference type="FunFam" id="3.30.70.600:FF:000001">
    <property type="entry name" value="30S ribosomal protein S10"/>
    <property type="match status" value="1"/>
</dbReference>
<dbReference type="Gene3D" id="3.30.70.600">
    <property type="entry name" value="Ribosomal protein S10 domain"/>
    <property type="match status" value="1"/>
</dbReference>
<dbReference type="HAMAP" id="MF_00508">
    <property type="entry name" value="Ribosomal_uS10"/>
    <property type="match status" value="1"/>
</dbReference>
<dbReference type="InterPro" id="IPR001848">
    <property type="entry name" value="Ribosomal_uS10"/>
</dbReference>
<dbReference type="InterPro" id="IPR018268">
    <property type="entry name" value="Ribosomal_uS10_CS"/>
</dbReference>
<dbReference type="InterPro" id="IPR027486">
    <property type="entry name" value="Ribosomal_uS10_dom"/>
</dbReference>
<dbReference type="InterPro" id="IPR036838">
    <property type="entry name" value="Ribosomal_uS10_dom_sf"/>
</dbReference>
<dbReference type="NCBIfam" id="NF001861">
    <property type="entry name" value="PRK00596.1"/>
    <property type="match status" value="1"/>
</dbReference>
<dbReference type="NCBIfam" id="TIGR01049">
    <property type="entry name" value="rpsJ_bact"/>
    <property type="match status" value="1"/>
</dbReference>
<dbReference type="PANTHER" id="PTHR11700">
    <property type="entry name" value="30S RIBOSOMAL PROTEIN S10 FAMILY MEMBER"/>
    <property type="match status" value="1"/>
</dbReference>
<dbReference type="Pfam" id="PF00338">
    <property type="entry name" value="Ribosomal_S10"/>
    <property type="match status" value="1"/>
</dbReference>
<dbReference type="PRINTS" id="PR00971">
    <property type="entry name" value="RIBOSOMALS10"/>
</dbReference>
<dbReference type="SMART" id="SM01403">
    <property type="entry name" value="Ribosomal_S10"/>
    <property type="match status" value="1"/>
</dbReference>
<dbReference type="SUPFAM" id="SSF54999">
    <property type="entry name" value="Ribosomal protein S10"/>
    <property type="match status" value="1"/>
</dbReference>
<dbReference type="PROSITE" id="PS00361">
    <property type="entry name" value="RIBOSOMAL_S10"/>
    <property type="match status" value="1"/>
</dbReference>
<gene>
    <name evidence="1" type="primary">rpsJ</name>
    <name type="ordered locus">Dtpsy_0272</name>
</gene>
<sequence>MSKQKIRIRLKAFDYKLIDQSAAEIVDTAKRTGAIVKGPVPLPTRMKRFDILRSPHVNKTSRDQFEIRTHQRLMDIVDPTDKTVDALMKLDLPAGVDVEIKLQ</sequence>
<proteinExistence type="inferred from homology"/>
<feature type="chain" id="PRO_1000146052" description="Small ribosomal subunit protein uS10">
    <location>
        <begin position="1"/>
        <end position="103"/>
    </location>
</feature>
<keyword id="KW-1185">Reference proteome</keyword>
<keyword id="KW-0687">Ribonucleoprotein</keyword>
<keyword id="KW-0689">Ribosomal protein</keyword>